<name>GACC_DICDI</name>
<organism>
    <name type="scientific">Dictyostelium discoideum</name>
    <name type="common">Social amoeba</name>
    <dbReference type="NCBI Taxonomy" id="44689"/>
    <lineage>
        <taxon>Eukaryota</taxon>
        <taxon>Amoebozoa</taxon>
        <taxon>Evosea</taxon>
        <taxon>Eumycetozoa</taxon>
        <taxon>Dictyostelia</taxon>
        <taxon>Dictyosteliales</taxon>
        <taxon>Dictyosteliaceae</taxon>
        <taxon>Dictyostelium</taxon>
    </lineage>
</organism>
<dbReference type="EMBL" id="AAFI02000066">
    <property type="protein sequence ID" value="EAL65154.1"/>
    <property type="molecule type" value="Genomic_DNA"/>
</dbReference>
<dbReference type="RefSeq" id="XP_638509.1">
    <property type="nucleotide sequence ID" value="XM_633417.1"/>
</dbReference>
<dbReference type="SMR" id="Q54PG5"/>
<dbReference type="FunCoup" id="Q54PG5">
    <property type="interactions" value="23"/>
</dbReference>
<dbReference type="STRING" id="44689.Q54PG5"/>
<dbReference type="PaxDb" id="44689-DDB0233845"/>
<dbReference type="EnsemblProtists" id="EAL65154">
    <property type="protein sequence ID" value="EAL65154"/>
    <property type="gene ID" value="DDB_G0284571"/>
</dbReference>
<dbReference type="GeneID" id="8624659"/>
<dbReference type="KEGG" id="ddi:DDB_G0284571"/>
<dbReference type="dictyBase" id="DDB_G0284571">
    <property type="gene designation" value="gacC"/>
</dbReference>
<dbReference type="VEuPathDB" id="AmoebaDB:DDB_G0284571"/>
<dbReference type="eggNOG" id="KOG1809">
    <property type="taxonomic scope" value="Eukaryota"/>
</dbReference>
<dbReference type="eggNOG" id="KOG3565">
    <property type="taxonomic scope" value="Eukaryota"/>
</dbReference>
<dbReference type="HOGENOM" id="CLU_691570_0_0_1"/>
<dbReference type="InParanoid" id="Q54PG5"/>
<dbReference type="OMA" id="ACIFKSY"/>
<dbReference type="PhylomeDB" id="Q54PG5"/>
<dbReference type="Reactome" id="R-DDI-9013148">
    <property type="pathway name" value="CDC42 GTPase cycle"/>
</dbReference>
<dbReference type="Reactome" id="R-DDI-9013149">
    <property type="pathway name" value="RAC1 GTPase cycle"/>
</dbReference>
<dbReference type="Reactome" id="R-DDI-9013423">
    <property type="pathway name" value="RAC3 GTPase cycle"/>
</dbReference>
<dbReference type="Reactome" id="R-DDI-9013424">
    <property type="pathway name" value="RHOV GTPase cycle"/>
</dbReference>
<dbReference type="PRO" id="PR:Q54PG5"/>
<dbReference type="Proteomes" id="UP000002195">
    <property type="component" value="Chromosome 4"/>
</dbReference>
<dbReference type="GO" id="GO:0005737">
    <property type="term" value="C:cytoplasm"/>
    <property type="evidence" value="ECO:0000318"/>
    <property type="project" value="GO_Central"/>
</dbReference>
<dbReference type="GO" id="GO:0005886">
    <property type="term" value="C:plasma membrane"/>
    <property type="evidence" value="ECO:0000318"/>
    <property type="project" value="GO_Central"/>
</dbReference>
<dbReference type="GO" id="GO:0005096">
    <property type="term" value="F:GTPase activator activity"/>
    <property type="evidence" value="ECO:0000318"/>
    <property type="project" value="GO_Central"/>
</dbReference>
<dbReference type="GO" id="GO:0007264">
    <property type="term" value="P:small GTPase-mediated signal transduction"/>
    <property type="evidence" value="ECO:0000318"/>
    <property type="project" value="GO_Central"/>
</dbReference>
<dbReference type="CDD" id="cd00159">
    <property type="entry name" value="RhoGAP"/>
    <property type="match status" value="1"/>
</dbReference>
<dbReference type="FunFam" id="1.10.555.10:FF:000068">
    <property type="entry name" value="RhoGAP domain containing protein"/>
    <property type="match status" value="1"/>
</dbReference>
<dbReference type="Gene3D" id="1.10.555.10">
    <property type="entry name" value="Rho GTPase activation protein"/>
    <property type="match status" value="1"/>
</dbReference>
<dbReference type="InterPro" id="IPR050729">
    <property type="entry name" value="Rho-GAP"/>
</dbReference>
<dbReference type="InterPro" id="IPR008936">
    <property type="entry name" value="Rho_GTPase_activation_prot"/>
</dbReference>
<dbReference type="InterPro" id="IPR000198">
    <property type="entry name" value="RhoGAP_dom"/>
</dbReference>
<dbReference type="PANTHER" id="PTHR23176:SF122">
    <property type="entry name" value="RHO GTPASE-ACTIVATING PROTEIN GACC-RELATED"/>
    <property type="match status" value="1"/>
</dbReference>
<dbReference type="PANTHER" id="PTHR23176">
    <property type="entry name" value="RHO/RAC/CDC GTPASE-ACTIVATING PROTEIN"/>
    <property type="match status" value="1"/>
</dbReference>
<dbReference type="Pfam" id="PF00620">
    <property type="entry name" value="RhoGAP"/>
    <property type="match status" value="1"/>
</dbReference>
<dbReference type="SMART" id="SM00324">
    <property type="entry name" value="RhoGAP"/>
    <property type="match status" value="1"/>
</dbReference>
<dbReference type="SUPFAM" id="SSF48350">
    <property type="entry name" value="GTPase activation domain, GAP"/>
    <property type="match status" value="1"/>
</dbReference>
<dbReference type="PROSITE" id="PS50238">
    <property type="entry name" value="RHOGAP"/>
    <property type="match status" value="1"/>
</dbReference>
<proteinExistence type="inferred from homology"/>
<feature type="chain" id="PRO_0000380195" description="Rho GTPase-activating protein gacC">
    <location>
        <begin position="1"/>
        <end position="399"/>
    </location>
</feature>
<feature type="domain" description="Rho-GAP" evidence="2">
    <location>
        <begin position="186"/>
        <end position="375"/>
    </location>
</feature>
<feature type="region of interest" description="Disordered" evidence="3">
    <location>
        <begin position="1"/>
        <end position="80"/>
    </location>
</feature>
<feature type="compositionally biased region" description="Basic and acidic residues" evidence="3">
    <location>
        <begin position="1"/>
        <end position="13"/>
    </location>
</feature>
<feature type="compositionally biased region" description="Polar residues" evidence="3">
    <location>
        <begin position="14"/>
        <end position="31"/>
    </location>
</feature>
<feature type="compositionally biased region" description="Low complexity" evidence="3">
    <location>
        <begin position="61"/>
        <end position="79"/>
    </location>
</feature>
<feature type="site" description="Arginine finger; crucial for GTP hydrolysis by stabilizing the transition state" evidence="2">
    <location>
        <position position="222"/>
    </location>
</feature>
<evidence type="ECO:0000250" key="1"/>
<evidence type="ECO:0000255" key="2">
    <source>
        <dbReference type="PROSITE-ProRule" id="PRU00172"/>
    </source>
</evidence>
<evidence type="ECO:0000256" key="3">
    <source>
        <dbReference type="SAM" id="MobiDB-lite"/>
    </source>
</evidence>
<accession>Q54PG5</accession>
<protein>
    <recommendedName>
        <fullName>Rho GTPase-activating protein gacC</fullName>
    </recommendedName>
    <alternativeName>
        <fullName>GTPase activating factor for raC protein C</fullName>
    </alternativeName>
</protein>
<reference key="1">
    <citation type="journal article" date="2005" name="Nature">
        <title>The genome of the social amoeba Dictyostelium discoideum.</title>
        <authorList>
            <person name="Eichinger L."/>
            <person name="Pachebat J.A."/>
            <person name="Gloeckner G."/>
            <person name="Rajandream M.A."/>
            <person name="Sucgang R."/>
            <person name="Berriman M."/>
            <person name="Song J."/>
            <person name="Olsen R."/>
            <person name="Szafranski K."/>
            <person name="Xu Q."/>
            <person name="Tunggal B."/>
            <person name="Kummerfeld S."/>
            <person name="Madera M."/>
            <person name="Konfortov B.A."/>
            <person name="Rivero F."/>
            <person name="Bankier A.T."/>
            <person name="Lehmann R."/>
            <person name="Hamlin N."/>
            <person name="Davies R."/>
            <person name="Gaudet P."/>
            <person name="Fey P."/>
            <person name="Pilcher K."/>
            <person name="Chen G."/>
            <person name="Saunders D."/>
            <person name="Sodergren E.J."/>
            <person name="Davis P."/>
            <person name="Kerhornou A."/>
            <person name="Nie X."/>
            <person name="Hall N."/>
            <person name="Anjard C."/>
            <person name="Hemphill L."/>
            <person name="Bason N."/>
            <person name="Farbrother P."/>
            <person name="Desany B."/>
            <person name="Just E."/>
            <person name="Morio T."/>
            <person name="Rost R."/>
            <person name="Churcher C.M."/>
            <person name="Cooper J."/>
            <person name="Haydock S."/>
            <person name="van Driessche N."/>
            <person name="Cronin A."/>
            <person name="Goodhead I."/>
            <person name="Muzny D.M."/>
            <person name="Mourier T."/>
            <person name="Pain A."/>
            <person name="Lu M."/>
            <person name="Harper D."/>
            <person name="Lindsay R."/>
            <person name="Hauser H."/>
            <person name="James K.D."/>
            <person name="Quiles M."/>
            <person name="Madan Babu M."/>
            <person name="Saito T."/>
            <person name="Buchrieser C."/>
            <person name="Wardroper A."/>
            <person name="Felder M."/>
            <person name="Thangavelu M."/>
            <person name="Johnson D."/>
            <person name="Knights A."/>
            <person name="Loulseged H."/>
            <person name="Mungall K.L."/>
            <person name="Oliver K."/>
            <person name="Price C."/>
            <person name="Quail M.A."/>
            <person name="Urushihara H."/>
            <person name="Hernandez J."/>
            <person name="Rabbinowitsch E."/>
            <person name="Steffen D."/>
            <person name="Sanders M."/>
            <person name="Ma J."/>
            <person name="Kohara Y."/>
            <person name="Sharp S."/>
            <person name="Simmonds M.N."/>
            <person name="Spiegler S."/>
            <person name="Tivey A."/>
            <person name="Sugano S."/>
            <person name="White B."/>
            <person name="Walker D."/>
            <person name="Woodward J.R."/>
            <person name="Winckler T."/>
            <person name="Tanaka Y."/>
            <person name="Shaulsky G."/>
            <person name="Schleicher M."/>
            <person name="Weinstock G.M."/>
            <person name="Rosenthal A."/>
            <person name="Cox E.C."/>
            <person name="Chisholm R.L."/>
            <person name="Gibbs R.A."/>
            <person name="Loomis W.F."/>
            <person name="Platzer M."/>
            <person name="Kay R.R."/>
            <person name="Williams J.G."/>
            <person name="Dear P.H."/>
            <person name="Noegel A.A."/>
            <person name="Barrell B.G."/>
            <person name="Kuspa A."/>
        </authorList>
    </citation>
    <scope>NUCLEOTIDE SEQUENCE [LARGE SCALE GENOMIC DNA]</scope>
    <source>
        <strain>AX4</strain>
    </source>
</reference>
<gene>
    <name type="primary">gacC</name>
    <name type="ORF">DDB_G0284571</name>
</gene>
<sequence>MESKDQNVYRKGSDNFSKGSNTFFGNLKSISTTTTTTTTTANTDQQVSKVAENNEIDDNSSVDSSSSNPSSSSTSTTPVKPKTFVDGALRGVWSIGVGVVNGAKGIVEQPYLGAKNNGLGGFVKGVAKGVSGVVILPAVGVLEFFSYTTQGIYNTPITVLDAMKSSPKEEEMITVSAEIPTIFFAVELEESFKTAKEKGIPHLLKVCIEFISRRKNIEGIFRISGSKFLIDEIQSKFDKGLITSVEDLDPNWIYEVACIFKSYFRYLPHSVIPDEQITEFYRIQNNITDATEKAAALKAVVNSIPNFQYTILYECISLLHDISLNSKENLMTPSNLSIVYGPSLLRPNIEKGDIQEIANANTIVFNLISFFQQIFIKNPDPSILEIEHPITPIKPMIQK</sequence>
<comment type="function">
    <text evidence="1">Rho GTPase-activating protein involved in the signal transduction pathway.</text>
</comment>
<comment type="subcellular location">
    <subcellularLocation>
        <location evidence="1">Cytoplasm</location>
    </subcellularLocation>
</comment>
<keyword id="KW-0963">Cytoplasm</keyword>
<keyword id="KW-0343">GTPase activation</keyword>
<keyword id="KW-1185">Reference proteome</keyword>